<evidence type="ECO:0000250" key="1"/>
<evidence type="ECO:0000255" key="2"/>
<evidence type="ECO:0000256" key="3">
    <source>
        <dbReference type="SAM" id="MobiDB-lite"/>
    </source>
</evidence>
<evidence type="ECO:0000305" key="4"/>
<evidence type="ECO:0000305" key="5">
    <source>
    </source>
</evidence>
<comment type="function">
    <text evidence="1">In elementary bodies (EBs, the infectious stage, which is able to survive outside the host cell) provides the structural integrity of the outer envelope through disulfide cross-links with the small cysteine-rich protein and the large cysteine-rich periplasmic protein. It has been described in publications as the Sarkosyl-insoluble COMC (Chlamydia outer membrane complex), and serves as the functional equivalent of peptidoglycan (By similarity).</text>
</comment>
<comment type="function">
    <text evidence="1">Permits diffusion of specific solutes through the outer membrane.</text>
</comment>
<comment type="subunit">
    <text evidence="1">Part of a disulfide cross-linked outer membrane complex (COMC) composed of the major outer membrane porin (MOMP), the small cysteine-rich protein (OmcA) and the large cysteine-rich periplasmic protein (OmcB).</text>
</comment>
<comment type="subcellular location">
    <subcellularLocation>
        <location evidence="1">Cell outer membrane</location>
        <topology evidence="1">Multi-pass membrane protein</topology>
    </subcellularLocation>
</comment>
<comment type="developmental stage">
    <text>It is present but some of the disulfide bonds are reduced in reticulate bodies (RBs).</text>
</comment>
<comment type="similarity">
    <text evidence="4">Belongs to the chlamydial porin (CP) (TC 1.B.2) family.</text>
</comment>
<comment type="caution">
    <text evidence="5">Was originally thought to originate from Chlamydia trachomatis.</text>
</comment>
<reference key="1">
    <citation type="journal article" date="1993" name="Mol. Biol. Evol.">
        <title>Comparison of the major outer-membrane protein (MOMP) gene of mouse pneumonitis (MoPn) and hamster SFPD strains of Chlamydia trachomatis with other Chlamydia strains.</title>
        <authorList>
            <person name="Zhang Y.-X."/>
            <person name="Fox J.G."/>
            <person name="Ho Y."/>
            <person name="Zhang L."/>
            <person name="Stills H.F. Jr."/>
            <person name="Smith T.F."/>
        </authorList>
    </citation>
    <scope>NUCLEOTIDE SEQUENCE [GENOMIC DNA]</scope>
    <source>
        <strain>SFPD</strain>
    </source>
</reference>
<sequence>MKKLLKSVLAFAVLGSASSLHALPVGNPAEPSLMIDGILWEGFGGDPCDPCTTWCDAISLRLGYYGDFVFDRVLKTDVNKQFEMGPVPTTTDTDAAADITTSTPRENPAYGKHMQDAEMFTNAAYMALNIWDRFDVFCTLGATSGYLKGNSASFNLVGLFGDGVANAANAIATVAADSLPNVSLSQAVVELYTDTAFAWSVGARAALWECGCATLGASFQYAQSKPKVEELNVLCNAAQFTINKPKGYVGKEFPLALTAGTDSATDTKDASIDYHEWQASLALSYRLNMFTPYIGVKWSRASFDADTIRIAQPKLAEAILDVTTWNPTIAGAGTIADGTGAAATANGLADTLQIVSLQLNKMKSRKSCGLAIGTTIVDADKYAVTVETRLIDERAAHVNAQFRF</sequence>
<organism>
    <name type="scientific">Chlamydia muridarum</name>
    <dbReference type="NCBI Taxonomy" id="83560"/>
    <lineage>
        <taxon>Bacteria</taxon>
        <taxon>Pseudomonadati</taxon>
        <taxon>Chlamydiota</taxon>
        <taxon>Chlamydiia</taxon>
        <taxon>Chlamydiales</taxon>
        <taxon>Chlamydiaceae</taxon>
        <taxon>Chlamydia/Chlamydophila group</taxon>
        <taxon>Chlamydia</taxon>
    </lineage>
</organism>
<protein>
    <recommendedName>
        <fullName>Major outer membrane porin</fullName>
        <shortName>MOMP</shortName>
    </recommendedName>
</protein>
<dbReference type="EMBL" id="L19221">
    <property type="protein sequence ID" value="AAA16615.1"/>
    <property type="molecule type" value="Genomic_DNA"/>
</dbReference>
<dbReference type="STRING" id="83560.NC80_00280"/>
<dbReference type="TCDB" id="1.B.2.1.4">
    <property type="family name" value="the chlamydial porin (cp) family"/>
</dbReference>
<dbReference type="GO" id="GO:0009279">
    <property type="term" value="C:cell outer membrane"/>
    <property type="evidence" value="ECO:0007669"/>
    <property type="project" value="UniProtKB-SubCell"/>
</dbReference>
<dbReference type="GO" id="GO:0046930">
    <property type="term" value="C:pore complex"/>
    <property type="evidence" value="ECO:0007669"/>
    <property type="project" value="UniProtKB-KW"/>
</dbReference>
<dbReference type="GO" id="GO:0015288">
    <property type="term" value="F:porin activity"/>
    <property type="evidence" value="ECO:0007669"/>
    <property type="project" value="UniProtKB-KW"/>
</dbReference>
<dbReference type="GO" id="GO:0005198">
    <property type="term" value="F:structural molecule activity"/>
    <property type="evidence" value="ECO:0007669"/>
    <property type="project" value="InterPro"/>
</dbReference>
<dbReference type="GO" id="GO:0006811">
    <property type="term" value="P:monoatomic ion transport"/>
    <property type="evidence" value="ECO:0007669"/>
    <property type="project" value="UniProtKB-KW"/>
</dbReference>
<dbReference type="GO" id="GO:0008360">
    <property type="term" value="P:regulation of cell shape"/>
    <property type="evidence" value="ECO:0007669"/>
    <property type="project" value="UniProtKB-KW"/>
</dbReference>
<dbReference type="InterPro" id="IPR000604">
    <property type="entry name" value="Major_OMP_Chlamydia"/>
</dbReference>
<dbReference type="Pfam" id="PF01308">
    <property type="entry name" value="Chlam_OMP"/>
    <property type="match status" value="1"/>
</dbReference>
<dbReference type="PRINTS" id="PR01334">
    <property type="entry name" value="CHLAMIDIAOMP"/>
</dbReference>
<proteinExistence type="evidence at transcript level"/>
<name>MOMPS_CHLMR</name>
<feature type="signal peptide" evidence="2">
    <location>
        <begin position="1"/>
        <end position="22"/>
    </location>
</feature>
<feature type="chain" id="PRO_0000253594" description="Major outer membrane porin">
    <location>
        <begin position="23"/>
        <end position="404"/>
    </location>
</feature>
<feature type="region of interest" description="Disordered" evidence="3">
    <location>
        <begin position="85"/>
        <end position="110"/>
    </location>
</feature>
<feature type="compositionally biased region" description="Low complexity" evidence="3">
    <location>
        <begin position="89"/>
        <end position="103"/>
    </location>
</feature>
<keyword id="KW-0998">Cell outer membrane</keyword>
<keyword id="KW-0133">Cell shape</keyword>
<keyword id="KW-1015">Disulfide bond</keyword>
<keyword id="KW-0406">Ion transport</keyword>
<keyword id="KW-0472">Membrane</keyword>
<keyword id="KW-0626">Porin</keyword>
<keyword id="KW-0732">Signal</keyword>
<keyword id="KW-0812">Transmembrane</keyword>
<keyword id="KW-1134">Transmembrane beta strand</keyword>
<keyword id="KW-0813">Transport</keyword>
<accession>Q46407</accession>
<gene>
    <name type="primary">ompA</name>
</gene>